<name>RL14_BACFN</name>
<organism>
    <name type="scientific">Bacteroides fragilis (strain ATCC 25285 / DSM 2151 / CCUG 4856 / JCM 11019 / LMG 10263 / NCTC 9343 / Onslow / VPI 2553 / EN-2)</name>
    <dbReference type="NCBI Taxonomy" id="272559"/>
    <lineage>
        <taxon>Bacteria</taxon>
        <taxon>Pseudomonadati</taxon>
        <taxon>Bacteroidota</taxon>
        <taxon>Bacteroidia</taxon>
        <taxon>Bacteroidales</taxon>
        <taxon>Bacteroidaceae</taxon>
        <taxon>Bacteroides</taxon>
    </lineage>
</organism>
<accession>Q5L8B9</accession>
<gene>
    <name evidence="1" type="primary">rplN</name>
    <name type="ordered locus">BF3993</name>
</gene>
<proteinExistence type="inferred from homology"/>
<reference key="1">
    <citation type="journal article" date="2005" name="Science">
        <title>Extensive DNA inversions in the B. fragilis genome control variable gene expression.</title>
        <authorList>
            <person name="Cerdeno-Tarraga A.-M."/>
            <person name="Patrick S."/>
            <person name="Crossman L.C."/>
            <person name="Blakely G."/>
            <person name="Abratt V."/>
            <person name="Lennard N."/>
            <person name="Poxton I."/>
            <person name="Duerden B."/>
            <person name="Harris B."/>
            <person name="Quail M.A."/>
            <person name="Barron A."/>
            <person name="Clark L."/>
            <person name="Corton C."/>
            <person name="Doggett J."/>
            <person name="Holden M.T.G."/>
            <person name="Larke N."/>
            <person name="Line A."/>
            <person name="Lord A."/>
            <person name="Norbertczak H."/>
            <person name="Ormond D."/>
            <person name="Price C."/>
            <person name="Rabbinowitsch E."/>
            <person name="Woodward J."/>
            <person name="Barrell B.G."/>
            <person name="Parkhill J."/>
        </authorList>
    </citation>
    <scope>NUCLEOTIDE SEQUENCE [LARGE SCALE GENOMIC DNA]</scope>
    <source>
        <strain>ATCC 25285 / DSM 2151 / CCUG 4856 / JCM 11019 / LMG 10263 / NCTC 9343 / Onslow / VPI 2553 / EN-2</strain>
    </source>
</reference>
<comment type="function">
    <text evidence="1">Binds to 23S rRNA. Forms part of two intersubunit bridges in the 70S ribosome.</text>
</comment>
<comment type="subunit">
    <text evidence="1">Part of the 50S ribosomal subunit. Forms a cluster with proteins L3 and L19. In the 70S ribosome, L14 and L19 interact and together make contacts with the 16S rRNA in bridges B5 and B8.</text>
</comment>
<comment type="similarity">
    <text evidence="1">Belongs to the universal ribosomal protein uL14 family.</text>
</comment>
<protein>
    <recommendedName>
        <fullName evidence="1">Large ribosomal subunit protein uL14</fullName>
    </recommendedName>
    <alternativeName>
        <fullName evidence="2">50S ribosomal protein L14</fullName>
    </alternativeName>
</protein>
<keyword id="KW-0687">Ribonucleoprotein</keyword>
<keyword id="KW-0689">Ribosomal protein</keyword>
<keyword id="KW-0694">RNA-binding</keyword>
<keyword id="KW-0699">rRNA-binding</keyword>
<feature type="chain" id="PRO_1000055514" description="Large ribosomal subunit protein uL14">
    <location>
        <begin position="1"/>
        <end position="121"/>
    </location>
</feature>
<sequence>MIQVESRLTVCDNSGAKEALCIRVLGGTGRRYASVGDVIVVSVKSVIPSSDVKKGAVSKALIVRTKKEIRRPDGSYIRFDDNACVLLNNAGEIRGSRIFGPVARELRATNMKVVSLAPEVL</sequence>
<dbReference type="EMBL" id="CR626927">
    <property type="protein sequence ID" value="CAH09669.1"/>
    <property type="molecule type" value="Genomic_DNA"/>
</dbReference>
<dbReference type="RefSeq" id="WP_004296340.1">
    <property type="nucleotide sequence ID" value="NZ_UFTH01000001.1"/>
</dbReference>
<dbReference type="SMR" id="Q5L8B9"/>
<dbReference type="PaxDb" id="272559-BF9343_3888"/>
<dbReference type="GeneID" id="93105314"/>
<dbReference type="KEGG" id="bfs:BF9343_3888"/>
<dbReference type="eggNOG" id="COG0093">
    <property type="taxonomic scope" value="Bacteria"/>
</dbReference>
<dbReference type="HOGENOM" id="CLU_095071_2_1_10"/>
<dbReference type="Proteomes" id="UP000006731">
    <property type="component" value="Chromosome"/>
</dbReference>
<dbReference type="GO" id="GO:0022625">
    <property type="term" value="C:cytosolic large ribosomal subunit"/>
    <property type="evidence" value="ECO:0007669"/>
    <property type="project" value="TreeGrafter"/>
</dbReference>
<dbReference type="GO" id="GO:0070180">
    <property type="term" value="F:large ribosomal subunit rRNA binding"/>
    <property type="evidence" value="ECO:0007669"/>
    <property type="project" value="TreeGrafter"/>
</dbReference>
<dbReference type="GO" id="GO:0003735">
    <property type="term" value="F:structural constituent of ribosome"/>
    <property type="evidence" value="ECO:0007669"/>
    <property type="project" value="InterPro"/>
</dbReference>
<dbReference type="GO" id="GO:0006412">
    <property type="term" value="P:translation"/>
    <property type="evidence" value="ECO:0007669"/>
    <property type="project" value="UniProtKB-UniRule"/>
</dbReference>
<dbReference type="CDD" id="cd00337">
    <property type="entry name" value="Ribosomal_uL14"/>
    <property type="match status" value="1"/>
</dbReference>
<dbReference type="FunFam" id="2.40.150.20:FF:000001">
    <property type="entry name" value="50S ribosomal protein L14"/>
    <property type="match status" value="1"/>
</dbReference>
<dbReference type="Gene3D" id="2.40.150.20">
    <property type="entry name" value="Ribosomal protein L14"/>
    <property type="match status" value="1"/>
</dbReference>
<dbReference type="HAMAP" id="MF_01367">
    <property type="entry name" value="Ribosomal_uL14"/>
    <property type="match status" value="1"/>
</dbReference>
<dbReference type="InterPro" id="IPR000218">
    <property type="entry name" value="Ribosomal_uL14"/>
</dbReference>
<dbReference type="InterPro" id="IPR005745">
    <property type="entry name" value="Ribosomal_uL14_bac-type"/>
</dbReference>
<dbReference type="InterPro" id="IPR019972">
    <property type="entry name" value="Ribosomal_uL14_CS"/>
</dbReference>
<dbReference type="InterPro" id="IPR036853">
    <property type="entry name" value="Ribosomal_uL14_sf"/>
</dbReference>
<dbReference type="NCBIfam" id="TIGR01067">
    <property type="entry name" value="rplN_bact"/>
    <property type="match status" value="1"/>
</dbReference>
<dbReference type="PANTHER" id="PTHR11761">
    <property type="entry name" value="50S/60S RIBOSOMAL PROTEIN L14/L23"/>
    <property type="match status" value="1"/>
</dbReference>
<dbReference type="PANTHER" id="PTHR11761:SF3">
    <property type="entry name" value="LARGE RIBOSOMAL SUBUNIT PROTEIN UL14M"/>
    <property type="match status" value="1"/>
</dbReference>
<dbReference type="Pfam" id="PF00238">
    <property type="entry name" value="Ribosomal_L14"/>
    <property type="match status" value="1"/>
</dbReference>
<dbReference type="SMART" id="SM01374">
    <property type="entry name" value="Ribosomal_L14"/>
    <property type="match status" value="1"/>
</dbReference>
<dbReference type="SUPFAM" id="SSF50193">
    <property type="entry name" value="Ribosomal protein L14"/>
    <property type="match status" value="1"/>
</dbReference>
<dbReference type="PROSITE" id="PS00049">
    <property type="entry name" value="RIBOSOMAL_L14"/>
    <property type="match status" value="1"/>
</dbReference>
<evidence type="ECO:0000255" key="1">
    <source>
        <dbReference type="HAMAP-Rule" id="MF_01367"/>
    </source>
</evidence>
<evidence type="ECO:0000305" key="2"/>